<name>MOBA_BACCZ</name>
<accession>Q632S8</accession>
<sequence>MSKYAGIVLAGGMSSRFGEPKALASWQGSTFIEHILKVMTSTLQEVVVISHSDIKEPVEKLVQVPVIEDIPHYKGNGPLAGIVSGMEYIEADWYAIMPCDAPNVSHEWFTILLGQTSNEYDAVVPIINGRKQPLLAAYHNRVKEKIYALLQEEKRSMVQLLSQCNVKYIAGEDVQANADWFINVNTKEEYVQAQKDLSNE</sequence>
<protein>
    <recommendedName>
        <fullName evidence="1">Probable molybdenum cofactor guanylyltransferase</fullName>
        <shortName evidence="1">MoCo guanylyltransferase</shortName>
        <ecNumber evidence="1">2.7.7.77</ecNumber>
    </recommendedName>
    <alternativeName>
        <fullName evidence="1">GTP:molybdopterin guanylyltransferase</fullName>
    </alternativeName>
    <alternativeName>
        <fullName evidence="1">Mo-MPT guanylyltransferase</fullName>
    </alternativeName>
    <alternativeName>
        <fullName evidence="1">Molybdopterin guanylyltransferase</fullName>
    </alternativeName>
    <alternativeName>
        <fullName evidence="1">Molybdopterin-guanine dinucleotide synthase</fullName>
        <shortName evidence="1">MGD synthase</shortName>
    </alternativeName>
</protein>
<comment type="function">
    <text evidence="1">Transfers a GMP moiety from GTP to Mo-molybdopterin (Mo-MPT) cofactor (Moco or molybdenum cofactor) to form Mo-molybdopterin guanine dinucleotide (Mo-MGD) cofactor.</text>
</comment>
<comment type="catalytic activity">
    <reaction evidence="1">
        <text>Mo-molybdopterin + GTP + H(+) = Mo-molybdopterin guanine dinucleotide + diphosphate</text>
        <dbReference type="Rhea" id="RHEA:34243"/>
        <dbReference type="ChEBI" id="CHEBI:15378"/>
        <dbReference type="ChEBI" id="CHEBI:33019"/>
        <dbReference type="ChEBI" id="CHEBI:37565"/>
        <dbReference type="ChEBI" id="CHEBI:71302"/>
        <dbReference type="ChEBI" id="CHEBI:71310"/>
        <dbReference type="EC" id="2.7.7.77"/>
    </reaction>
</comment>
<comment type="cofactor">
    <cofactor evidence="1">
        <name>Mg(2+)</name>
        <dbReference type="ChEBI" id="CHEBI:18420"/>
    </cofactor>
</comment>
<comment type="subcellular location">
    <subcellularLocation>
        <location evidence="1">Cytoplasm</location>
    </subcellularLocation>
</comment>
<comment type="domain">
    <text evidence="1">The N-terminal domain determines nucleotide recognition and specific binding, while the C-terminal domain determines the specific binding to the target protein.</text>
</comment>
<comment type="similarity">
    <text evidence="1">Belongs to the MobA family.</text>
</comment>
<gene>
    <name evidence="1" type="primary">mobA</name>
    <name type="ordered locus">BCE33L4514</name>
</gene>
<keyword id="KW-0963">Cytoplasm</keyword>
<keyword id="KW-0342">GTP-binding</keyword>
<keyword id="KW-0460">Magnesium</keyword>
<keyword id="KW-0479">Metal-binding</keyword>
<keyword id="KW-0501">Molybdenum cofactor biosynthesis</keyword>
<keyword id="KW-0547">Nucleotide-binding</keyword>
<keyword id="KW-0808">Transferase</keyword>
<dbReference type="EC" id="2.7.7.77" evidence="1"/>
<dbReference type="EMBL" id="CP000001">
    <property type="protein sequence ID" value="AAU15759.1"/>
    <property type="molecule type" value="Genomic_DNA"/>
</dbReference>
<dbReference type="RefSeq" id="WP_000049603.1">
    <property type="nucleotide sequence ID" value="NC_006274.1"/>
</dbReference>
<dbReference type="SMR" id="Q632S8"/>
<dbReference type="KEGG" id="bcz:BCE33L4514"/>
<dbReference type="PATRIC" id="fig|288681.22.peg.854"/>
<dbReference type="Proteomes" id="UP000002612">
    <property type="component" value="Chromosome"/>
</dbReference>
<dbReference type="GO" id="GO:0005737">
    <property type="term" value="C:cytoplasm"/>
    <property type="evidence" value="ECO:0007669"/>
    <property type="project" value="UniProtKB-SubCell"/>
</dbReference>
<dbReference type="GO" id="GO:0005525">
    <property type="term" value="F:GTP binding"/>
    <property type="evidence" value="ECO:0007669"/>
    <property type="project" value="UniProtKB-UniRule"/>
</dbReference>
<dbReference type="GO" id="GO:0046872">
    <property type="term" value="F:metal ion binding"/>
    <property type="evidence" value="ECO:0007669"/>
    <property type="project" value="UniProtKB-KW"/>
</dbReference>
<dbReference type="GO" id="GO:0061603">
    <property type="term" value="F:molybdenum cofactor guanylyltransferase activity"/>
    <property type="evidence" value="ECO:0007669"/>
    <property type="project" value="UniProtKB-EC"/>
</dbReference>
<dbReference type="GO" id="GO:0006777">
    <property type="term" value="P:Mo-molybdopterin cofactor biosynthetic process"/>
    <property type="evidence" value="ECO:0007669"/>
    <property type="project" value="UniProtKB-KW"/>
</dbReference>
<dbReference type="CDD" id="cd02503">
    <property type="entry name" value="MobA"/>
    <property type="match status" value="1"/>
</dbReference>
<dbReference type="FunFam" id="3.90.550.10:FF:000121">
    <property type="entry name" value="Probable molybdenum cofactor guanylyltransferase"/>
    <property type="match status" value="1"/>
</dbReference>
<dbReference type="Gene3D" id="3.90.550.10">
    <property type="entry name" value="Spore Coat Polysaccharide Biosynthesis Protein SpsA, Chain A"/>
    <property type="match status" value="1"/>
</dbReference>
<dbReference type="HAMAP" id="MF_00316">
    <property type="entry name" value="MobA"/>
    <property type="match status" value="1"/>
</dbReference>
<dbReference type="InterPro" id="IPR025877">
    <property type="entry name" value="MobA-like_NTP_Trfase"/>
</dbReference>
<dbReference type="InterPro" id="IPR013482">
    <property type="entry name" value="Molybde_CF_guanTrfase"/>
</dbReference>
<dbReference type="InterPro" id="IPR029044">
    <property type="entry name" value="Nucleotide-diphossugar_trans"/>
</dbReference>
<dbReference type="PANTHER" id="PTHR19136">
    <property type="entry name" value="MOLYBDENUM COFACTOR GUANYLYLTRANSFERASE"/>
    <property type="match status" value="1"/>
</dbReference>
<dbReference type="PANTHER" id="PTHR19136:SF81">
    <property type="entry name" value="MOLYBDENUM COFACTOR GUANYLYLTRANSFERASE"/>
    <property type="match status" value="1"/>
</dbReference>
<dbReference type="Pfam" id="PF12804">
    <property type="entry name" value="NTP_transf_3"/>
    <property type="match status" value="1"/>
</dbReference>
<dbReference type="SUPFAM" id="SSF53448">
    <property type="entry name" value="Nucleotide-diphospho-sugar transferases"/>
    <property type="match status" value="1"/>
</dbReference>
<organism>
    <name type="scientific">Bacillus cereus (strain ZK / E33L)</name>
    <dbReference type="NCBI Taxonomy" id="288681"/>
    <lineage>
        <taxon>Bacteria</taxon>
        <taxon>Bacillati</taxon>
        <taxon>Bacillota</taxon>
        <taxon>Bacilli</taxon>
        <taxon>Bacillales</taxon>
        <taxon>Bacillaceae</taxon>
        <taxon>Bacillus</taxon>
        <taxon>Bacillus cereus group</taxon>
    </lineage>
</organism>
<feature type="chain" id="PRO_1000019101" description="Probable molybdenum cofactor guanylyltransferase">
    <location>
        <begin position="1"/>
        <end position="200"/>
    </location>
</feature>
<feature type="binding site" evidence="1">
    <location>
        <begin position="9"/>
        <end position="11"/>
    </location>
    <ligand>
        <name>GTP</name>
        <dbReference type="ChEBI" id="CHEBI:37565"/>
    </ligand>
</feature>
<feature type="binding site" evidence="1">
    <location>
        <position position="21"/>
    </location>
    <ligand>
        <name>GTP</name>
        <dbReference type="ChEBI" id="CHEBI:37565"/>
    </ligand>
</feature>
<feature type="binding site" evidence="1">
    <location>
        <position position="69"/>
    </location>
    <ligand>
        <name>GTP</name>
        <dbReference type="ChEBI" id="CHEBI:37565"/>
    </ligand>
</feature>
<feature type="binding site" evidence="1">
    <location>
        <position position="100"/>
    </location>
    <ligand>
        <name>GTP</name>
        <dbReference type="ChEBI" id="CHEBI:37565"/>
    </ligand>
</feature>
<feature type="binding site" evidence="1">
    <location>
        <position position="100"/>
    </location>
    <ligand>
        <name>Mg(2+)</name>
        <dbReference type="ChEBI" id="CHEBI:18420"/>
    </ligand>
</feature>
<evidence type="ECO:0000255" key="1">
    <source>
        <dbReference type="HAMAP-Rule" id="MF_00316"/>
    </source>
</evidence>
<proteinExistence type="inferred from homology"/>
<reference key="1">
    <citation type="journal article" date="2006" name="J. Bacteriol.">
        <title>Pathogenomic sequence analysis of Bacillus cereus and Bacillus thuringiensis isolates closely related to Bacillus anthracis.</title>
        <authorList>
            <person name="Han C.S."/>
            <person name="Xie G."/>
            <person name="Challacombe J.F."/>
            <person name="Altherr M.R."/>
            <person name="Bhotika S.S."/>
            <person name="Bruce D."/>
            <person name="Campbell C.S."/>
            <person name="Campbell M.L."/>
            <person name="Chen J."/>
            <person name="Chertkov O."/>
            <person name="Cleland C."/>
            <person name="Dimitrijevic M."/>
            <person name="Doggett N.A."/>
            <person name="Fawcett J.J."/>
            <person name="Glavina T."/>
            <person name="Goodwin L.A."/>
            <person name="Hill K.K."/>
            <person name="Hitchcock P."/>
            <person name="Jackson P.J."/>
            <person name="Keim P."/>
            <person name="Kewalramani A.R."/>
            <person name="Longmire J."/>
            <person name="Lucas S."/>
            <person name="Malfatti S."/>
            <person name="McMurry K."/>
            <person name="Meincke L.J."/>
            <person name="Misra M."/>
            <person name="Moseman B.L."/>
            <person name="Mundt M."/>
            <person name="Munk A.C."/>
            <person name="Okinaka R.T."/>
            <person name="Parson-Quintana B."/>
            <person name="Reilly L.P."/>
            <person name="Richardson P."/>
            <person name="Robinson D.L."/>
            <person name="Rubin E."/>
            <person name="Saunders E."/>
            <person name="Tapia R."/>
            <person name="Tesmer J.G."/>
            <person name="Thayer N."/>
            <person name="Thompson L.S."/>
            <person name="Tice H."/>
            <person name="Ticknor L.O."/>
            <person name="Wills P.L."/>
            <person name="Brettin T.S."/>
            <person name="Gilna P."/>
        </authorList>
    </citation>
    <scope>NUCLEOTIDE SEQUENCE [LARGE SCALE GENOMIC DNA]</scope>
    <source>
        <strain>ZK / E33L</strain>
    </source>
</reference>